<organismHost>
    <name type="scientific">Homo sapiens</name>
    <name type="common">Human</name>
    <dbReference type="NCBI Taxonomy" id="9606"/>
</organismHost>
<feature type="signal peptide" evidence="1">
    <location>
        <begin position="1"/>
        <end position="22"/>
    </location>
</feature>
<feature type="chain" id="PRO_0000036471" description="Early E3B 10.4 kDa protein">
    <location>
        <begin position="23"/>
        <end position="91"/>
    </location>
</feature>
<feature type="topological domain" description="Lumenal" evidence="2">
    <location>
        <begin position="23"/>
        <end position="34"/>
    </location>
</feature>
<feature type="transmembrane region" description="Helical" evidence="2">
    <location>
        <begin position="35"/>
        <end position="60"/>
    </location>
</feature>
<feature type="topological domain" description="Cytoplasmic" evidence="2">
    <location>
        <begin position="61"/>
        <end position="91"/>
    </location>
</feature>
<organism>
    <name type="scientific">Human adenovirus C serotype 6</name>
    <name type="common">HAdV-6</name>
    <name type="synonym">Human adenovirus 6</name>
    <dbReference type="NCBI Taxonomy" id="10534"/>
    <lineage>
        <taxon>Viruses</taxon>
        <taxon>Varidnaviria</taxon>
        <taxon>Bamfordvirae</taxon>
        <taxon>Preplasmiviricota</taxon>
        <taxon>Tectiliviricetes</taxon>
        <taxon>Rowavirales</taxon>
        <taxon>Adenoviridae</taxon>
        <taxon>Mastadenovirus</taxon>
        <taxon>Human mastadenovirus C</taxon>
    </lineage>
</organism>
<name>E310_ADE06</name>
<keyword id="KW-0244">Early protein</keyword>
<keyword id="KW-1038">Host endoplasmic reticulum</keyword>
<keyword id="KW-1043">Host membrane</keyword>
<keyword id="KW-0472">Membrane</keyword>
<keyword id="KW-0732">Signal</keyword>
<keyword id="KW-0812">Transmembrane</keyword>
<keyword id="KW-1133">Transmembrane helix</keyword>
<comment type="function">
    <text evidence="1">Down-regulates the EGF receptor.</text>
</comment>
<comment type="subcellular location">
    <subcellularLocation>
        <location>Host endoplasmic reticulum membrane</location>
        <topology>Single-pass type I membrane protein</topology>
    </subcellularLocation>
</comment>
<comment type="similarity">
    <text evidence="3">Belongs to the adenoviridae E3B family.</text>
</comment>
<protein>
    <recommendedName>
        <fullName>Early E3B 10.4 kDa protein</fullName>
    </recommendedName>
</protein>
<proteinExistence type="inferred from homology"/>
<dbReference type="EMBL" id="Y16037">
    <property type="protein sequence ID" value="CAA75992.1"/>
    <property type="molecule type" value="Genomic_DNA"/>
</dbReference>
<dbReference type="SMR" id="O55654"/>
<dbReference type="GO" id="GO:0044167">
    <property type="term" value="C:host cell endoplasmic reticulum membrane"/>
    <property type="evidence" value="ECO:0007669"/>
    <property type="project" value="UniProtKB-SubCell"/>
</dbReference>
<dbReference type="GO" id="GO:0016020">
    <property type="term" value="C:membrane"/>
    <property type="evidence" value="ECO:0007669"/>
    <property type="project" value="UniProtKB-KW"/>
</dbReference>
<dbReference type="InterPro" id="IPR005041">
    <property type="entry name" value="Adeno_E3B"/>
</dbReference>
<dbReference type="Pfam" id="PF03376">
    <property type="entry name" value="Adeno_E3B"/>
    <property type="match status" value="1"/>
</dbReference>
<reference key="1">
    <citation type="submission" date="1997-12" db="EMBL/GenBank/DDBJ databases">
        <title>Sequence analysis of group C human adenoviruses type 1 and 6 for five genes of region E3.</title>
        <authorList>
            <person name="Reichmann H."/>
            <person name="Schaarschmidt E."/>
            <person name="Geisler B."/>
            <person name="Hausmann J."/>
            <person name="Ortmann D."/>
            <person name="Bauer U."/>
            <person name="Flunker G."/>
            <person name="Seidel W."/>
        </authorList>
    </citation>
    <scope>NUCLEOTIDE SEQUENCE [GENOMIC DNA]</scope>
</reference>
<accession>O55654</accession>
<sequence length="91" mass="10389">MIPRVLILLTLVALFCACSTLAAVAHIEVDCIPPFTVYLLYGFVTLILICSLVTVVIAFIQFIDWICVRIAYLRHHPQYRDRTIADLLRIL</sequence>
<evidence type="ECO:0000250" key="1"/>
<evidence type="ECO:0000255" key="2"/>
<evidence type="ECO:0000305" key="3"/>